<gene>
    <name type="primary">tmoT</name>
</gene>
<accession>Q8KR08</accession>
<protein>
    <recommendedName>
        <fullName>Response regulator protein TmoT</fullName>
    </recommendedName>
</protein>
<organism>
    <name type="scientific">Ectopseudomonas mendocina</name>
    <name type="common">Pseudomonas mendocina</name>
    <dbReference type="NCBI Taxonomy" id="300"/>
    <lineage>
        <taxon>Bacteria</taxon>
        <taxon>Pseudomonadati</taxon>
        <taxon>Pseudomonadota</taxon>
        <taxon>Gammaproteobacteria</taxon>
        <taxon>Pseudomonadales</taxon>
        <taxon>Pseudomonadaceae</taxon>
        <taxon>Ectopseudomonas</taxon>
    </lineage>
</organism>
<name>TMOT_ECTME</name>
<feature type="chain" id="PRO_0000423592" description="Response regulator protein TmoT">
    <location>
        <begin position="1"/>
        <end position="220"/>
    </location>
</feature>
<feature type="domain" description="Response regulatory" evidence="2">
    <location>
        <begin position="21"/>
        <end position="135"/>
    </location>
</feature>
<feature type="domain" description="HTH luxR-type" evidence="3">
    <location>
        <begin position="151"/>
        <end position="216"/>
    </location>
</feature>
<feature type="DNA-binding region" description="H-T-H motif" evidence="3">
    <location>
        <begin position="175"/>
        <end position="194"/>
    </location>
</feature>
<feature type="modified residue" description="4-aspartylphosphate" evidence="2">
    <location>
        <position position="70"/>
    </location>
</feature>
<keyword id="KW-0010">Activator</keyword>
<keyword id="KW-0963">Cytoplasm</keyword>
<keyword id="KW-0238">DNA-binding</keyword>
<keyword id="KW-0597">Phosphoprotein</keyword>
<keyword id="KW-0804">Transcription</keyword>
<keyword id="KW-0805">Transcription regulation</keyword>
<keyword id="KW-0902">Two-component regulatory system</keyword>
<dbReference type="EMBL" id="AY052500">
    <property type="protein sequence ID" value="AAL13333.1"/>
    <property type="molecule type" value="Genomic_DNA"/>
</dbReference>
<dbReference type="SMR" id="Q8KR08"/>
<dbReference type="GO" id="GO:0005737">
    <property type="term" value="C:cytoplasm"/>
    <property type="evidence" value="ECO:0007669"/>
    <property type="project" value="UniProtKB-SubCell"/>
</dbReference>
<dbReference type="GO" id="GO:0003677">
    <property type="term" value="F:DNA binding"/>
    <property type="evidence" value="ECO:0007669"/>
    <property type="project" value="UniProtKB-KW"/>
</dbReference>
<dbReference type="GO" id="GO:0000160">
    <property type="term" value="P:phosphorelay signal transduction system"/>
    <property type="evidence" value="ECO:0007669"/>
    <property type="project" value="UniProtKB-KW"/>
</dbReference>
<dbReference type="GO" id="GO:0006355">
    <property type="term" value="P:regulation of DNA-templated transcription"/>
    <property type="evidence" value="ECO:0007669"/>
    <property type="project" value="InterPro"/>
</dbReference>
<dbReference type="CDD" id="cd06170">
    <property type="entry name" value="LuxR_C_like"/>
    <property type="match status" value="1"/>
</dbReference>
<dbReference type="CDD" id="cd17537">
    <property type="entry name" value="REC_FixJ"/>
    <property type="match status" value="1"/>
</dbReference>
<dbReference type="FunFam" id="3.40.50.2300:FF:000018">
    <property type="entry name" value="DNA-binding transcriptional regulator NtrC"/>
    <property type="match status" value="1"/>
</dbReference>
<dbReference type="FunFam" id="1.10.10.10:FF:000876">
    <property type="entry name" value="Response regulator protein TodT"/>
    <property type="match status" value="1"/>
</dbReference>
<dbReference type="Gene3D" id="3.40.50.2300">
    <property type="match status" value="1"/>
</dbReference>
<dbReference type="Gene3D" id="1.10.10.10">
    <property type="entry name" value="Winged helix-like DNA-binding domain superfamily/Winged helix DNA-binding domain"/>
    <property type="match status" value="1"/>
</dbReference>
<dbReference type="InterPro" id="IPR011006">
    <property type="entry name" value="CheY-like_superfamily"/>
</dbReference>
<dbReference type="InterPro" id="IPR016032">
    <property type="entry name" value="Sig_transdc_resp-reg_C-effctor"/>
</dbReference>
<dbReference type="InterPro" id="IPR001789">
    <property type="entry name" value="Sig_transdc_resp-reg_receiver"/>
</dbReference>
<dbReference type="InterPro" id="IPR000792">
    <property type="entry name" value="Tscrpt_reg_LuxR_C"/>
</dbReference>
<dbReference type="InterPro" id="IPR036388">
    <property type="entry name" value="WH-like_DNA-bd_sf"/>
</dbReference>
<dbReference type="PANTHER" id="PTHR44688">
    <property type="entry name" value="DNA-BINDING TRANSCRIPTIONAL ACTIVATOR DEVR_DOSR"/>
    <property type="match status" value="1"/>
</dbReference>
<dbReference type="PANTHER" id="PTHR44688:SF16">
    <property type="entry name" value="DNA-BINDING TRANSCRIPTIONAL ACTIVATOR DEVR_DOSR"/>
    <property type="match status" value="1"/>
</dbReference>
<dbReference type="Pfam" id="PF00196">
    <property type="entry name" value="GerE"/>
    <property type="match status" value="1"/>
</dbReference>
<dbReference type="Pfam" id="PF00072">
    <property type="entry name" value="Response_reg"/>
    <property type="match status" value="1"/>
</dbReference>
<dbReference type="PRINTS" id="PR00038">
    <property type="entry name" value="HTHLUXR"/>
</dbReference>
<dbReference type="SMART" id="SM00421">
    <property type="entry name" value="HTH_LUXR"/>
    <property type="match status" value="1"/>
</dbReference>
<dbReference type="SMART" id="SM00448">
    <property type="entry name" value="REC"/>
    <property type="match status" value="1"/>
</dbReference>
<dbReference type="SUPFAM" id="SSF46894">
    <property type="entry name" value="C-terminal effector domain of the bipartite response regulators"/>
    <property type="match status" value="1"/>
</dbReference>
<dbReference type="SUPFAM" id="SSF52172">
    <property type="entry name" value="CheY-like"/>
    <property type="match status" value="1"/>
</dbReference>
<dbReference type="PROSITE" id="PS50043">
    <property type="entry name" value="HTH_LUXR_2"/>
    <property type="match status" value="1"/>
</dbReference>
<dbReference type="PROSITE" id="PS50110">
    <property type="entry name" value="RESPONSE_REGULATORY"/>
    <property type="match status" value="1"/>
</dbReference>
<comment type="function">
    <text evidence="4 5">Member of the two-component regulatory system TmoS/TmoT involved in the regulation of toluene degradation. Induces expression of tmoX operon.</text>
</comment>
<comment type="subcellular location">
    <subcellularLocation>
        <location evidence="1">Cytoplasm</location>
    </subcellularLocation>
</comment>
<comment type="PTM">
    <text evidence="1">Phosphorylated by TmoS.</text>
</comment>
<evidence type="ECO:0000250" key="1"/>
<evidence type="ECO:0000255" key="2">
    <source>
        <dbReference type="PROSITE-ProRule" id="PRU00169"/>
    </source>
</evidence>
<evidence type="ECO:0000255" key="3">
    <source>
        <dbReference type="PROSITE-ProRule" id="PRU00411"/>
    </source>
</evidence>
<evidence type="ECO:0000269" key="4">
    <source>
    </source>
</evidence>
<evidence type="ECO:0000269" key="5">
    <source>
    </source>
</evidence>
<proteinExistence type="evidence at protein level"/>
<reference key="1">
    <citation type="journal article" date="2002" name="J. Bacteriol.">
        <title>Cross-regulation between a novel two-component signal transduction system for catabolism of toluene in Pseudomonas mendocina and the TodST system from Pseudomonas putida.</title>
        <authorList>
            <person name="Ramos-Gonzalez M.I."/>
            <person name="Olson M."/>
            <person name="Gatenby A.A."/>
            <person name="Mosqueda G."/>
            <person name="Manzanera M."/>
            <person name="Campos M.J."/>
            <person name="Vichez S."/>
            <person name="Ramos J.L."/>
        </authorList>
    </citation>
    <scope>NUCLEOTIDE SEQUENCE [GENOMIC DNA]</scope>
    <scope>FUNCTION</scope>
    <scope>GENE NAME</scope>
    <source>
        <strain>KR1</strain>
    </source>
</reference>
<reference key="2">
    <citation type="journal article" date="2012" name="Microb. Biotechnol.">
        <title>Study of the TmoS/TmoT two-component system: towards the functional characterization of the family of TodS/TodT like systems.</title>
        <authorList>
            <person name="Silva-Jimenez H."/>
            <person name="Garcia-Fontana C."/>
            <person name="Cadirci B.H."/>
            <person name="Ramos-Gonzalez M.I."/>
            <person name="Ramos J.L."/>
            <person name="Krell T."/>
        </authorList>
    </citation>
    <scope>FUNCTION IN TOLUENE DEGRADATION</scope>
    <source>
        <strain>KR1</strain>
    </source>
</reference>
<sequence>MFLRKYPGQLGRQHMNDQESVIYIVDDDNAVLEALSSLVRSIGLRVKCFSSATAFLNDVGQLACGCLILDVRMPEMSGLDVQRKLAELGEQIPIIFISGHGDIPMAVKAIKAGAIDFFTKPFREEDLLGAIRTALKLAPQQKENAPQISELKASYESLSKREQQVLKFVLQGFLNKQTALELDISEATVKVHRHNIMKKMKVSSVQDLVRVTERLKDSLK</sequence>